<accession>Q73YK4</accession>
<comment type="function">
    <text evidence="1">The glycine cleavage system catalyzes the degradation of glycine.</text>
</comment>
<comment type="catalytic activity">
    <reaction evidence="1">
        <text>N(6)-[(R)-S(8)-aminomethyldihydrolipoyl]-L-lysyl-[protein] + (6S)-5,6,7,8-tetrahydrofolate = N(6)-[(R)-dihydrolipoyl]-L-lysyl-[protein] + (6R)-5,10-methylene-5,6,7,8-tetrahydrofolate + NH4(+)</text>
        <dbReference type="Rhea" id="RHEA:16945"/>
        <dbReference type="Rhea" id="RHEA-COMP:10475"/>
        <dbReference type="Rhea" id="RHEA-COMP:10492"/>
        <dbReference type="ChEBI" id="CHEBI:15636"/>
        <dbReference type="ChEBI" id="CHEBI:28938"/>
        <dbReference type="ChEBI" id="CHEBI:57453"/>
        <dbReference type="ChEBI" id="CHEBI:83100"/>
        <dbReference type="ChEBI" id="CHEBI:83143"/>
        <dbReference type="EC" id="2.1.2.10"/>
    </reaction>
</comment>
<comment type="subunit">
    <text evidence="1">The glycine cleavage system is composed of four proteins: P, T, L and H.</text>
</comment>
<comment type="similarity">
    <text evidence="1">Belongs to the GcvT family.</text>
</comment>
<sequence>MSNEADLLHGPLEDRHRDLGASFAEFGGWLMPVSYAGTVSEHNATRNAVGLFDVSHLGKALVRGTGAARFVNSALTNDLNRIGPGKAQYTLCCNESGGVIDDLIAYYVDDDEIFLVPNAANTAAVVEALQGAAPAGVTVRNLHRSYAVLAVQGPRSANVLAELGLPSDMDYMAYADTSFRQVPVRVCRTGYTGEHGYELLPPWESAGVVFDALAAAVSQAGGQPAGLGARDTLRTEMGYPLHGHELSPDISPLQARCGWAIGWKKEAFFGRDALLAEKEAGPRRLLRGLRMVGRGVLRAGLTVLVGDTPVGVTTSGTFSPTLQAGIALALINTDADVRDGQEVTVDVRGRAATCEVVRPPFVAVKTR</sequence>
<reference key="1">
    <citation type="journal article" date="2005" name="Proc. Natl. Acad. Sci. U.S.A.">
        <title>The complete genome sequence of Mycobacterium avium subspecies paratuberculosis.</title>
        <authorList>
            <person name="Li L."/>
            <person name="Bannantine J.P."/>
            <person name="Zhang Q."/>
            <person name="Amonsin A."/>
            <person name="May B.J."/>
            <person name="Alt D."/>
            <person name="Banerji N."/>
            <person name="Kanjilal S."/>
            <person name="Kapur V."/>
        </authorList>
    </citation>
    <scope>NUCLEOTIDE SEQUENCE [LARGE SCALE GENOMIC DNA]</scope>
    <source>
        <strain>ATCC BAA-968 / K-10</strain>
    </source>
</reference>
<protein>
    <recommendedName>
        <fullName evidence="1">Aminomethyltransferase</fullName>
        <ecNumber evidence="1">2.1.2.10</ecNumber>
    </recommendedName>
    <alternativeName>
        <fullName evidence="1">Glycine cleavage system T protein</fullName>
    </alternativeName>
</protein>
<keyword id="KW-0032">Aminotransferase</keyword>
<keyword id="KW-1185">Reference proteome</keyword>
<keyword id="KW-0808">Transferase</keyword>
<dbReference type="EC" id="2.1.2.10" evidence="1"/>
<dbReference type="EMBL" id="AE016958">
    <property type="protein sequence ID" value="AAS04268.1"/>
    <property type="molecule type" value="Genomic_DNA"/>
</dbReference>
<dbReference type="RefSeq" id="WP_003872281.1">
    <property type="nucleotide sequence ID" value="NZ_CP106873.1"/>
</dbReference>
<dbReference type="SMR" id="Q73YK4"/>
<dbReference type="STRING" id="262316.MAP_1951c"/>
<dbReference type="KEGG" id="mpa:MAP_1951c"/>
<dbReference type="PATRIC" id="fig|262316.17.peg.2069"/>
<dbReference type="eggNOG" id="COG0404">
    <property type="taxonomic scope" value="Bacteria"/>
</dbReference>
<dbReference type="HOGENOM" id="CLU_007884_10_2_11"/>
<dbReference type="Proteomes" id="UP000000580">
    <property type="component" value="Chromosome"/>
</dbReference>
<dbReference type="GO" id="GO:0005829">
    <property type="term" value="C:cytosol"/>
    <property type="evidence" value="ECO:0007669"/>
    <property type="project" value="TreeGrafter"/>
</dbReference>
<dbReference type="GO" id="GO:0005960">
    <property type="term" value="C:glycine cleavage complex"/>
    <property type="evidence" value="ECO:0007669"/>
    <property type="project" value="InterPro"/>
</dbReference>
<dbReference type="GO" id="GO:0004047">
    <property type="term" value="F:aminomethyltransferase activity"/>
    <property type="evidence" value="ECO:0007669"/>
    <property type="project" value="UniProtKB-UniRule"/>
</dbReference>
<dbReference type="GO" id="GO:0008483">
    <property type="term" value="F:transaminase activity"/>
    <property type="evidence" value="ECO:0007669"/>
    <property type="project" value="UniProtKB-KW"/>
</dbReference>
<dbReference type="GO" id="GO:0019464">
    <property type="term" value="P:glycine decarboxylation via glycine cleavage system"/>
    <property type="evidence" value="ECO:0007669"/>
    <property type="project" value="UniProtKB-UniRule"/>
</dbReference>
<dbReference type="FunFam" id="3.30.70.1400:FF:000001">
    <property type="entry name" value="Aminomethyltransferase"/>
    <property type="match status" value="1"/>
</dbReference>
<dbReference type="FunFam" id="4.10.1250.10:FF:000001">
    <property type="entry name" value="Aminomethyltransferase"/>
    <property type="match status" value="1"/>
</dbReference>
<dbReference type="Gene3D" id="2.40.30.110">
    <property type="entry name" value="Aminomethyltransferase beta-barrel domains"/>
    <property type="match status" value="1"/>
</dbReference>
<dbReference type="Gene3D" id="3.30.70.1400">
    <property type="entry name" value="Aminomethyltransferase beta-barrel domains"/>
    <property type="match status" value="1"/>
</dbReference>
<dbReference type="Gene3D" id="4.10.1250.10">
    <property type="entry name" value="Aminomethyltransferase fragment"/>
    <property type="match status" value="1"/>
</dbReference>
<dbReference type="Gene3D" id="3.30.1360.120">
    <property type="entry name" value="Probable tRNA modification gtpase trme, domain 1"/>
    <property type="match status" value="1"/>
</dbReference>
<dbReference type="HAMAP" id="MF_00259">
    <property type="entry name" value="GcvT"/>
    <property type="match status" value="1"/>
</dbReference>
<dbReference type="InterPro" id="IPR006223">
    <property type="entry name" value="GCS_T"/>
</dbReference>
<dbReference type="InterPro" id="IPR022903">
    <property type="entry name" value="GCS_T_bac"/>
</dbReference>
<dbReference type="InterPro" id="IPR013977">
    <property type="entry name" value="GCST_C"/>
</dbReference>
<dbReference type="InterPro" id="IPR006222">
    <property type="entry name" value="GCV_T_N"/>
</dbReference>
<dbReference type="InterPro" id="IPR028896">
    <property type="entry name" value="GcvT/YgfZ/DmdA"/>
</dbReference>
<dbReference type="InterPro" id="IPR029043">
    <property type="entry name" value="GcvT/YgfZ_C"/>
</dbReference>
<dbReference type="InterPro" id="IPR027266">
    <property type="entry name" value="TrmE/GcvT_dom1"/>
</dbReference>
<dbReference type="NCBIfam" id="TIGR00528">
    <property type="entry name" value="gcvT"/>
    <property type="match status" value="1"/>
</dbReference>
<dbReference type="NCBIfam" id="NF001567">
    <property type="entry name" value="PRK00389.1"/>
    <property type="match status" value="1"/>
</dbReference>
<dbReference type="PANTHER" id="PTHR43757">
    <property type="entry name" value="AMINOMETHYLTRANSFERASE"/>
    <property type="match status" value="1"/>
</dbReference>
<dbReference type="PANTHER" id="PTHR43757:SF2">
    <property type="entry name" value="AMINOMETHYLTRANSFERASE, MITOCHONDRIAL"/>
    <property type="match status" value="1"/>
</dbReference>
<dbReference type="Pfam" id="PF01571">
    <property type="entry name" value="GCV_T"/>
    <property type="match status" value="1"/>
</dbReference>
<dbReference type="Pfam" id="PF08669">
    <property type="entry name" value="GCV_T_C"/>
    <property type="match status" value="1"/>
</dbReference>
<dbReference type="PIRSF" id="PIRSF006487">
    <property type="entry name" value="GcvT"/>
    <property type="match status" value="1"/>
</dbReference>
<dbReference type="SUPFAM" id="SSF101790">
    <property type="entry name" value="Aminomethyltransferase beta-barrel domain"/>
    <property type="match status" value="1"/>
</dbReference>
<dbReference type="SUPFAM" id="SSF103025">
    <property type="entry name" value="Folate-binding domain"/>
    <property type="match status" value="1"/>
</dbReference>
<name>GCST_MYCPA</name>
<gene>
    <name evidence="1" type="primary">gcvT</name>
    <name type="ordered locus">MAP_1951c</name>
</gene>
<evidence type="ECO:0000255" key="1">
    <source>
        <dbReference type="HAMAP-Rule" id="MF_00259"/>
    </source>
</evidence>
<proteinExistence type="inferred from homology"/>
<organism>
    <name type="scientific">Mycolicibacterium paratuberculosis (strain ATCC BAA-968 / K-10)</name>
    <name type="common">Mycobacterium paratuberculosis</name>
    <dbReference type="NCBI Taxonomy" id="262316"/>
    <lineage>
        <taxon>Bacteria</taxon>
        <taxon>Bacillati</taxon>
        <taxon>Actinomycetota</taxon>
        <taxon>Actinomycetes</taxon>
        <taxon>Mycobacteriales</taxon>
        <taxon>Mycobacteriaceae</taxon>
        <taxon>Mycobacterium</taxon>
        <taxon>Mycobacterium avium complex (MAC)</taxon>
    </lineage>
</organism>
<feature type="chain" id="PRO_0000122573" description="Aminomethyltransferase">
    <location>
        <begin position="1"/>
        <end position="367"/>
    </location>
</feature>